<feature type="chain" id="PRO_0000312239" description="Protein tweety homolog 1">
    <location>
        <begin position="1"/>
        <end position="450"/>
    </location>
</feature>
<feature type="topological domain" description="Extracellular" evidence="13">
    <location>
        <begin position="1"/>
        <end position="43"/>
    </location>
</feature>
<feature type="transmembrane region" description="Helical; Name=1" evidence="2">
    <location>
        <begin position="44"/>
        <end position="64"/>
    </location>
</feature>
<feature type="topological domain" description="Cytoplasmic" evidence="13">
    <location>
        <begin position="65"/>
        <end position="88"/>
    </location>
</feature>
<feature type="transmembrane region" description="Helical; Name=2" evidence="2">
    <location>
        <begin position="89"/>
        <end position="109"/>
    </location>
</feature>
<feature type="topological domain" description="Extracellular" evidence="13">
    <location>
        <begin position="110"/>
        <end position="214"/>
    </location>
</feature>
<feature type="transmembrane region" description="Helical; Name=3" evidence="2">
    <location>
        <begin position="215"/>
        <end position="235"/>
    </location>
</feature>
<feature type="topological domain" description="Cytoplasmic" evidence="13">
    <location>
        <begin position="236"/>
        <end position="240"/>
    </location>
</feature>
<feature type="transmembrane region" description="Helical; Name=4" evidence="2">
    <location>
        <begin position="241"/>
        <end position="261"/>
    </location>
</feature>
<feature type="topological domain" description="Extracellular" evidence="13">
    <location>
        <begin position="262"/>
        <end position="390"/>
    </location>
</feature>
<feature type="transmembrane region" description="Helical; Name=5" evidence="2">
    <location>
        <begin position="391"/>
        <end position="411"/>
    </location>
</feature>
<feature type="topological domain" description="Cytoplasmic" evidence="13">
    <location>
        <begin position="412"/>
        <end position="450"/>
    </location>
</feature>
<feature type="region of interest" description="Disordered" evidence="3">
    <location>
        <begin position="428"/>
        <end position="450"/>
    </location>
</feature>
<feature type="site" description="Essential for the formation of the channel-pore" evidence="1">
    <location>
        <position position="165"/>
    </location>
</feature>
<feature type="modified residue" description="Phosphoserine" evidence="1">
    <location>
        <position position="440"/>
    </location>
</feature>
<feature type="glycosylation site" description="N-linked (GlcNAc...) asparagine" evidence="2">
    <location>
        <position position="130"/>
    </location>
</feature>
<feature type="glycosylation site" description="N-linked (GlcNAc...) asparagine" evidence="2">
    <location>
        <position position="205"/>
    </location>
</feature>
<feature type="glycosylation site" description="N-linked (GlcNAc...) asparagine" evidence="2">
    <location>
        <position position="284"/>
    </location>
</feature>
<feature type="glycosylation site" description="N-linked (GlcNAc...) asparagine" evidence="2">
    <location>
        <position position="355"/>
    </location>
</feature>
<feature type="disulfide bond" evidence="7">
    <location>
        <begin position="275"/>
        <end position="385"/>
    </location>
</feature>
<feature type="disulfide bond" evidence="7">
    <location>
        <begin position="303"/>
        <end position="370"/>
    </location>
</feature>
<feature type="splice variant" id="VSP_029753" description="In isoform 4." evidence="10">
    <location>
        <begin position="1"/>
        <end position="212"/>
    </location>
</feature>
<feature type="splice variant" id="VSP_029754" description="In isoform 5." evidence="8">
    <location>
        <begin position="1"/>
        <end position="85"/>
    </location>
</feature>
<feature type="splice variant" id="VSP_029755" description="In isoform 5." evidence="8">
    <original>GGGCVTWSCIVALLAG</original>
    <variation>MEKVRLWRGSESRAAI</variation>
    <location>
        <begin position="86"/>
        <end position="101"/>
    </location>
</feature>
<feature type="splice variant" id="VSP_029756" description="In isoform 5." evidence="8">
    <location>
        <begin position="140"/>
        <end position="142"/>
    </location>
</feature>
<feature type="splice variant" id="VSP_029757" description="In isoform 4." evidence="10">
    <original>R</original>
    <variation>M</variation>
    <location>
        <position position="213"/>
    </location>
</feature>
<feature type="splice variant" id="VSP_029758" description="In isoform 5." evidence="8">
    <original>DYGAALRGLCEDALEGLLFLLLFSLLSAGALATALCSLPRAWALFPPSDDYDDTDDDDPFNPQESKRFVQWQSSI</original>
    <variation>VKPLPSQFLLPRGASVSTHRTTSSFSLDPCHCA</variation>
    <location>
        <begin position="376"/>
        <end position="450"/>
    </location>
</feature>
<feature type="splice variant" id="VSP_029759" description="In isoform 3." evidence="8 9 10">
    <original>SDDYDDTDDDDPFNPQESKRFVQWQSSI</original>
    <variation>RNPSALCSGSRLSEPLLPAGLEPGSPLRSFPGCRRRPH</variation>
    <location>
        <begin position="423"/>
        <end position="450"/>
    </location>
</feature>
<feature type="splice variant" id="VSP_029760" description="In isoform 2 and isoform 4." evidence="10 11">
    <original>P</original>
    <variation>PQ</variation>
    <location>
        <position position="437"/>
    </location>
</feature>
<feature type="sequence conflict" description="In Ref. 2; BAD20189." evidence="12" ref="2">
    <original>A</original>
    <variation>S</variation>
    <location>
        <position position="380"/>
    </location>
</feature>
<comment type="function">
    <text evidence="1">Calcium-independent, swelling-dependent volume-regulated anion channel (VRAC-swell) which plays a pivotal role in the process of regulatory volume decrease (RVD) in the brain through the efflux of anions like chloride and organic osmolytes like glutamate.</text>
</comment>
<comment type="function">
    <molecule>Isoform 3</molecule>
    <text evidence="4">Ca(2+)-independent, swelling-activated chloride channel, possibly involved in regulation of cell volume.</text>
</comment>
<comment type="catalytic activity">
    <molecule>Isoform 3</molecule>
    <reaction evidence="4">
        <text>chloride(in) = chloride(out)</text>
        <dbReference type="Rhea" id="RHEA:29823"/>
        <dbReference type="ChEBI" id="CHEBI:17996"/>
    </reaction>
</comment>
<comment type="catalytic activity">
    <reaction evidence="1">
        <text>chloride(in) = chloride(out)</text>
        <dbReference type="Rhea" id="RHEA:29823"/>
        <dbReference type="ChEBI" id="CHEBI:17996"/>
    </reaction>
</comment>
<comment type="catalytic activity">
    <reaction evidence="1">
        <text>L-glutamate(out) = L-glutamate(in)</text>
        <dbReference type="Rhea" id="RHEA:66336"/>
        <dbReference type="ChEBI" id="CHEBI:29985"/>
    </reaction>
    <physiologicalReaction direction="right-to-left" evidence="1">
        <dbReference type="Rhea" id="RHEA:66338"/>
    </physiologicalReaction>
</comment>
<comment type="subunit">
    <text evidence="1 7">Homotetramer; disulfide-linked (By similarity). Homodimer (PubMed:34385445).</text>
</comment>
<comment type="interaction">
    <interactant intactId="EBI-20793786">
        <id>Q9H313</id>
    </interactant>
    <interactant intactId="EBI-15639515">
        <id>O15354</id>
        <label>GPR37</label>
    </interactant>
    <organismsDiffer>false</organismsDiffer>
    <experiments>2</experiments>
</comment>
<comment type="interaction">
    <interactant intactId="EBI-17671298">
        <id>Q9H313-4</id>
    </interactant>
    <interactant intactId="EBI-21591415">
        <id>P13473-2</id>
        <label>LAMP2</label>
    </interactant>
    <organismsDiffer>false</organismsDiffer>
    <experiments>3</experiments>
</comment>
<comment type="interaction">
    <interactant intactId="EBI-17671298">
        <id>Q9H313-4</id>
    </interactant>
    <interactant intactId="EBI-5280197">
        <id>O75400-2</id>
        <label>PRPF40A</label>
    </interactant>
    <organismsDiffer>false</organismsDiffer>
    <experiments>3</experiments>
</comment>
<comment type="interaction">
    <interactant intactId="EBI-17671298">
        <id>Q9H313-4</id>
    </interactant>
    <interactant intactId="EBI-2623095">
        <id>Q9Y371</id>
        <label>SH3GLB1</label>
    </interactant>
    <organismsDiffer>false</organismsDiffer>
    <experiments>3</experiments>
</comment>
<comment type="interaction">
    <interactant intactId="EBI-17671298">
        <id>Q9H313-4</id>
    </interactant>
    <interactant intactId="EBI-2852148">
        <id>Q9H2L4</id>
        <label>TMEM60</label>
    </interactant>
    <organismsDiffer>false</organismsDiffer>
    <experiments>3</experiments>
</comment>
<comment type="subcellular location">
    <subcellularLocation>
        <location evidence="7">Cell membrane</location>
        <topology evidence="2">Multi-pass membrane protein</topology>
    </subcellularLocation>
</comment>
<comment type="alternative products">
    <event type="alternative splicing"/>
    <isoform>
        <id>Q9H313-1</id>
        <name>1</name>
        <sequence type="displayed"/>
    </isoform>
    <isoform>
        <id>Q9H313-2</id>
        <name>2</name>
        <sequence type="described" ref="VSP_029760"/>
    </isoform>
    <isoform>
        <id>Q9H313-3</id>
        <name>3</name>
        <name>TTYH1s</name>
        <sequence type="described" ref="VSP_029759"/>
    </isoform>
    <isoform>
        <id>Q9H313-4</id>
        <name>4</name>
        <sequence type="described" ref="VSP_029753 VSP_029757 VSP_029760"/>
    </isoform>
    <isoform>
        <id>Q9H313-5</id>
        <name>5</name>
        <sequence type="described" ref="VSP_029754 VSP_029755 VSP_029756 VSP_029758"/>
    </isoform>
</comment>
<comment type="tissue specificity">
    <text evidence="5">Expressed in brain, eye, ovary and testis, and at lower levels in muscle, placenta, liver and lung.</text>
</comment>
<comment type="PTM">
    <text evidence="6">N-glycosylated. Contains high-mannose, hybrid and complex oligosaccharides.</text>
</comment>
<comment type="similarity">
    <text evidence="12">Belongs to the tweety family.</text>
</comment>
<comment type="caution">
    <text evidence="7">According to PubMed:34385445, lacks swelling-dependent volume-regulated anion channel activity.</text>
</comment>
<sequence>MGAPPGYRPSAWVHLLHQLPRADFQLRPVPSVFAPQEQEYQQALLLVAALAGLGLGLSLIFIAVYLIRFCCCRPPEPPGSKIPSPGGGCVTWSCIVALLAGCTGIGIGFYGNSETSDGVSQLSSALLHANHTLSTIDHLVLETVERLGEAVRTELTTLEEVLEPRTELVAAARGARRQAEAAAQQLQGLAFWQGVPLSPLQVAENVSFVEEYRWLAYVLLLLLELLVCLFTLLGLAKQSKWLVIVMTVMSLLVLVLSWGSMGLEAATAVGLSDFCSNPDPYVLNLTQEETGLSSDILSYYLLCNRAVSNPFQQRLTLSQRALANIHSQLLGLEREAVPQFPSAQKPLLSLEETLNVTEGNFHQLVALLHCRSLHKDYGAALRGLCEDALEGLLFLLLFSLLSAGALATALCSLPRAWALFPPSDDYDDTDDDDPFNPQESKRFVQWQSSI</sequence>
<dbReference type="EMBL" id="AF177909">
    <property type="protein sequence ID" value="AAG02580.1"/>
    <property type="molecule type" value="mRNA"/>
</dbReference>
<dbReference type="EMBL" id="AB162930">
    <property type="protein sequence ID" value="BAD20189.1"/>
    <property type="molecule type" value="mRNA"/>
</dbReference>
<dbReference type="EMBL" id="AB188496">
    <property type="protein sequence ID" value="BAD37142.1"/>
    <property type="molecule type" value="mRNA"/>
</dbReference>
<dbReference type="EMBL" id="AK126690">
    <property type="protein sequence ID" value="BAC86645.1"/>
    <property type="molecule type" value="mRNA"/>
</dbReference>
<dbReference type="EMBL" id="AK289468">
    <property type="protein sequence ID" value="BAF82157.1"/>
    <property type="molecule type" value="mRNA"/>
</dbReference>
<dbReference type="EMBL" id="CU207370">
    <property type="status" value="NOT_ANNOTATED_CDS"/>
    <property type="molecule type" value="Genomic_DNA"/>
</dbReference>
<dbReference type="EMBL" id="CU467002">
    <property type="status" value="NOT_ANNOTATED_CDS"/>
    <property type="molecule type" value="Genomic_DNA"/>
</dbReference>
<dbReference type="EMBL" id="CH471135">
    <property type="protein sequence ID" value="EAW72240.1"/>
    <property type="molecule type" value="Genomic_DNA"/>
</dbReference>
<dbReference type="EMBL" id="CH471135">
    <property type="protein sequence ID" value="EAW72242.1"/>
    <property type="molecule type" value="Genomic_DNA"/>
</dbReference>
<dbReference type="EMBL" id="BC011347">
    <property type="protein sequence ID" value="AAH11347.1"/>
    <property type="molecule type" value="mRNA"/>
</dbReference>
<dbReference type="EMBL" id="BC019358">
    <property type="protein sequence ID" value="AAH19358.1"/>
    <property type="molecule type" value="mRNA"/>
</dbReference>
<dbReference type="CCDS" id="CCDS12893.1">
    <molecule id="Q9H313-1"/>
</dbReference>
<dbReference type="CCDS" id="CCDS33106.1">
    <molecule id="Q9H313-3"/>
</dbReference>
<dbReference type="CCDS" id="CCDS56102.1">
    <molecule id="Q9H313-2"/>
</dbReference>
<dbReference type="RefSeq" id="NP_001005367.1">
    <molecule id="Q9H313-3"/>
    <property type="nucleotide sequence ID" value="NM_001005367.3"/>
</dbReference>
<dbReference type="RefSeq" id="NP_001188390.1">
    <molecule id="Q9H313-2"/>
    <property type="nucleotide sequence ID" value="NM_001201461.2"/>
</dbReference>
<dbReference type="RefSeq" id="NP_065710.1">
    <molecule id="Q9H313-1"/>
    <property type="nucleotide sequence ID" value="NM_020659.4"/>
</dbReference>
<dbReference type="PDB" id="7P5J">
    <property type="method" value="EM"/>
    <property type="resolution" value="4.00 A"/>
    <property type="chains" value="A/B=2-450"/>
</dbReference>
<dbReference type="PDBsum" id="7P5J"/>
<dbReference type="EMDB" id="EMD-13200"/>
<dbReference type="SMR" id="Q9H313"/>
<dbReference type="BioGRID" id="121494">
    <property type="interactions" value="539"/>
</dbReference>
<dbReference type="FunCoup" id="Q9H313">
    <property type="interactions" value="811"/>
</dbReference>
<dbReference type="IntAct" id="Q9H313">
    <property type="interactions" value="298"/>
</dbReference>
<dbReference type="MINT" id="Q9H313"/>
<dbReference type="STRING" id="9606.ENSP00000365714"/>
<dbReference type="TCDB" id="1.A.48.1.2">
    <property type="family name" value="the anion channel tweety (tweety) family"/>
</dbReference>
<dbReference type="GlyCosmos" id="Q9H313">
    <property type="glycosylation" value="4 sites, No reported glycans"/>
</dbReference>
<dbReference type="GlyGen" id="Q9H313">
    <property type="glycosylation" value="4 sites"/>
</dbReference>
<dbReference type="iPTMnet" id="Q9H313"/>
<dbReference type="PhosphoSitePlus" id="Q9H313"/>
<dbReference type="SwissPalm" id="Q9H313"/>
<dbReference type="BioMuta" id="TTYH1"/>
<dbReference type="DMDM" id="74718142"/>
<dbReference type="jPOST" id="Q9H313"/>
<dbReference type="MassIVE" id="Q9H313"/>
<dbReference type="PaxDb" id="9606-ENSP00000365714"/>
<dbReference type="PeptideAtlas" id="Q9H313"/>
<dbReference type="ProteomicsDB" id="80648">
    <molecule id="Q9H313-1"/>
</dbReference>
<dbReference type="ProteomicsDB" id="80649">
    <molecule id="Q9H313-2"/>
</dbReference>
<dbReference type="ProteomicsDB" id="80650">
    <molecule id="Q9H313-3"/>
</dbReference>
<dbReference type="ProteomicsDB" id="80651">
    <molecule id="Q9H313-4"/>
</dbReference>
<dbReference type="ProteomicsDB" id="80652">
    <molecule id="Q9H313-5"/>
</dbReference>
<dbReference type="Antibodypedia" id="32911">
    <property type="antibodies" value="171 antibodies from 24 providers"/>
</dbReference>
<dbReference type="DNASU" id="57348"/>
<dbReference type="Ensembl" id="ENST00000301194.8">
    <molecule id="Q9H313-2"/>
    <property type="protein sequence ID" value="ENSP00000301194.4"/>
    <property type="gene ID" value="ENSG00000167614.14"/>
</dbReference>
<dbReference type="Ensembl" id="ENST00000376530.8">
    <molecule id="Q9H313-1"/>
    <property type="protein sequence ID" value="ENSP00000365713.3"/>
    <property type="gene ID" value="ENSG00000167614.14"/>
</dbReference>
<dbReference type="Ensembl" id="ENST00000376531.3">
    <molecule id="Q9H313-3"/>
    <property type="protein sequence ID" value="ENSP00000365714.3"/>
    <property type="gene ID" value="ENSG00000167614.14"/>
</dbReference>
<dbReference type="Ensembl" id="ENST00000611133.4">
    <molecule id="Q9H313-2"/>
    <property type="protein sequence ID" value="ENSP00000480177.1"/>
    <property type="gene ID" value="ENSG00000276887.4"/>
</dbReference>
<dbReference type="Ensembl" id="ENST00000611471.1">
    <molecule id="Q9H313-3"/>
    <property type="protein sequence ID" value="ENSP00000484881.1"/>
    <property type="gene ID" value="ENSG00000275650.4"/>
</dbReference>
<dbReference type="Ensembl" id="ENST00000611711.4">
    <molecule id="Q9H313-1"/>
    <property type="protein sequence ID" value="ENSP00000484774.1"/>
    <property type="gene ID" value="ENSG00000276887.4"/>
</dbReference>
<dbReference type="Ensembl" id="ENST00000614387.1">
    <molecule id="Q9H313-4"/>
    <property type="protein sequence ID" value="ENSP00000484077.1"/>
    <property type="gene ID" value="ENSG00000276887.4"/>
</dbReference>
<dbReference type="Ensembl" id="ENST00000614458.4">
    <molecule id="Q9H313-3"/>
    <property type="protein sequence ID" value="ENSP00000484835.1"/>
    <property type="gene ID" value="ENSG00000276887.4"/>
</dbReference>
<dbReference type="Ensembl" id="ENST00000616929.4">
    <molecule id="Q9H313-2"/>
    <property type="protein sequence ID" value="ENSP00000479779.1"/>
    <property type="gene ID" value="ENSG00000276537.4"/>
</dbReference>
<dbReference type="Ensembl" id="ENST00000619450.4">
    <molecule id="Q9H313-1"/>
    <property type="protein sequence ID" value="ENSP00000480769.1"/>
    <property type="gene ID" value="ENSG00000275650.4"/>
</dbReference>
<dbReference type="Ensembl" id="ENST00000619453.4">
    <molecule id="Q9H313-3"/>
    <property type="protein sequence ID" value="ENSP00000484548.1"/>
    <property type="gene ID" value="ENSG00000276537.4"/>
</dbReference>
<dbReference type="Ensembl" id="ENST00000619591.4">
    <molecule id="Q9H313-2"/>
    <property type="protein sequence ID" value="ENSP00000481601.1"/>
    <property type="gene ID" value="ENSG00000275650.4"/>
</dbReference>
<dbReference type="Ensembl" id="ENST00000620133.4">
    <molecule id="Q9H313-5"/>
    <property type="protein sequence ID" value="ENSP00000483288.1"/>
    <property type="gene ID" value="ENSG00000276887.4"/>
</dbReference>
<dbReference type="Ensembl" id="ENST00000620298.4">
    <molecule id="Q9H313-1"/>
    <property type="protein sequence ID" value="ENSP00000481138.1"/>
    <property type="gene ID" value="ENSG00000276537.4"/>
</dbReference>
<dbReference type="Ensembl" id="ENST00000622771.1">
    <molecule id="Q9H313-4"/>
    <property type="protein sequence ID" value="ENSP00000482372.1"/>
    <property type="gene ID" value="ENSG00000276537.4"/>
</dbReference>
<dbReference type="GeneID" id="57348"/>
<dbReference type="KEGG" id="hsa:57348"/>
<dbReference type="MANE-Select" id="ENST00000376530.8">
    <property type="protein sequence ID" value="ENSP00000365713.3"/>
    <property type="RefSeq nucleotide sequence ID" value="NM_020659.4"/>
    <property type="RefSeq protein sequence ID" value="NP_065710.1"/>
</dbReference>
<dbReference type="UCSC" id="uc002qfq.4">
    <molecule id="Q9H313-1"/>
    <property type="organism name" value="human"/>
</dbReference>
<dbReference type="AGR" id="HGNC:13476"/>
<dbReference type="CTD" id="57348"/>
<dbReference type="DisGeNET" id="57348"/>
<dbReference type="GeneCards" id="TTYH1"/>
<dbReference type="HGNC" id="HGNC:13476">
    <property type="gene designation" value="TTYH1"/>
</dbReference>
<dbReference type="HPA" id="ENSG00000167614">
    <property type="expression patterns" value="Tissue enriched (brain)"/>
</dbReference>
<dbReference type="MIM" id="605784">
    <property type="type" value="gene"/>
</dbReference>
<dbReference type="neXtProt" id="NX_Q9H313"/>
<dbReference type="OpenTargets" id="ENSG00000167614"/>
<dbReference type="PharmGKB" id="PA37778"/>
<dbReference type="VEuPathDB" id="HostDB:ENSG00000167614"/>
<dbReference type="eggNOG" id="KOG4433">
    <property type="taxonomic scope" value="Eukaryota"/>
</dbReference>
<dbReference type="GeneTree" id="ENSGT00950000183060"/>
<dbReference type="HOGENOM" id="CLU_023758_0_1_1"/>
<dbReference type="InParanoid" id="Q9H313"/>
<dbReference type="OMA" id="DFCSEPN"/>
<dbReference type="OrthoDB" id="187568at2759"/>
<dbReference type="PAN-GO" id="Q9H313">
    <property type="GO annotations" value="4 GO annotations based on evolutionary models"/>
</dbReference>
<dbReference type="PhylomeDB" id="Q9H313"/>
<dbReference type="TreeFam" id="TF319025"/>
<dbReference type="PathwayCommons" id="Q9H313"/>
<dbReference type="Reactome" id="R-HSA-2672351">
    <molecule id="Q9H313-3"/>
    <property type="pathway name" value="Stimuli-sensing channels"/>
</dbReference>
<dbReference type="SignaLink" id="Q9H313"/>
<dbReference type="BioGRID-ORCS" id="57348">
    <property type="hits" value="34 hits in 1148 CRISPR screens"/>
</dbReference>
<dbReference type="ChiTaRS" id="TTYH1">
    <property type="organism name" value="human"/>
</dbReference>
<dbReference type="GenomeRNAi" id="57348"/>
<dbReference type="Pharos" id="Q9H313">
    <property type="development level" value="Tbio"/>
</dbReference>
<dbReference type="PRO" id="PR:Q9H313"/>
<dbReference type="Proteomes" id="UP000005640">
    <property type="component" value="Chromosome 19"/>
</dbReference>
<dbReference type="RNAct" id="Q9H313">
    <property type="molecule type" value="protein"/>
</dbReference>
<dbReference type="Bgee" id="ENSG00000167614">
    <property type="expression patterns" value="Expressed in ventricular zone and 101 other cell types or tissues"/>
</dbReference>
<dbReference type="ExpressionAtlas" id="Q9H313">
    <property type="expression patterns" value="baseline and differential"/>
</dbReference>
<dbReference type="GO" id="GO:0034707">
    <property type="term" value="C:chloride channel complex"/>
    <property type="evidence" value="ECO:0007669"/>
    <property type="project" value="UniProtKB-KW"/>
</dbReference>
<dbReference type="GO" id="GO:0031527">
    <property type="term" value="C:filopodium membrane"/>
    <property type="evidence" value="ECO:0007669"/>
    <property type="project" value="Ensembl"/>
</dbReference>
<dbReference type="GO" id="GO:0032433">
    <property type="term" value="C:filopodium tip"/>
    <property type="evidence" value="ECO:0007669"/>
    <property type="project" value="Ensembl"/>
</dbReference>
<dbReference type="GO" id="GO:0016020">
    <property type="term" value="C:membrane"/>
    <property type="evidence" value="ECO:0000304"/>
    <property type="project" value="UniProtKB"/>
</dbReference>
<dbReference type="GO" id="GO:0005886">
    <property type="term" value="C:plasma membrane"/>
    <property type="evidence" value="ECO:0000314"/>
    <property type="project" value="UniProtKB"/>
</dbReference>
<dbReference type="GO" id="GO:0030868">
    <property type="term" value="C:smooth endoplasmic reticulum membrane"/>
    <property type="evidence" value="ECO:0000318"/>
    <property type="project" value="GO_Central"/>
</dbReference>
<dbReference type="GO" id="GO:0045202">
    <property type="term" value="C:synapse"/>
    <property type="evidence" value="ECO:0007669"/>
    <property type="project" value="Ensembl"/>
</dbReference>
<dbReference type="GO" id="GO:0005509">
    <property type="term" value="F:calcium ion binding"/>
    <property type="evidence" value="ECO:0007669"/>
    <property type="project" value="Ensembl"/>
</dbReference>
<dbReference type="GO" id="GO:0005254">
    <property type="term" value="F:chloride channel activity"/>
    <property type="evidence" value="ECO:0000304"/>
    <property type="project" value="Reactome"/>
</dbReference>
<dbReference type="GO" id="GO:0005229">
    <property type="term" value="F:intracellularly calcium-gated chloride channel activity"/>
    <property type="evidence" value="ECO:0000318"/>
    <property type="project" value="GO_Central"/>
</dbReference>
<dbReference type="GO" id="GO:0005381">
    <property type="term" value="F:iron ion transmembrane transporter activity"/>
    <property type="evidence" value="ECO:0000303"/>
    <property type="project" value="UniProtKB"/>
</dbReference>
<dbReference type="GO" id="GO:0072320">
    <property type="term" value="F:volume-sensitive chloride channel activity"/>
    <property type="evidence" value="ECO:0000314"/>
    <property type="project" value="FlyBase"/>
</dbReference>
<dbReference type="GO" id="GO:0000902">
    <property type="term" value="P:cell morphogenesis"/>
    <property type="evidence" value="ECO:0007669"/>
    <property type="project" value="Ensembl"/>
</dbReference>
<dbReference type="GO" id="GO:0098609">
    <property type="term" value="P:cell-cell adhesion"/>
    <property type="evidence" value="ECO:0007669"/>
    <property type="project" value="Ensembl"/>
</dbReference>
<dbReference type="GO" id="GO:0031589">
    <property type="term" value="P:cell-substrate adhesion"/>
    <property type="evidence" value="ECO:0007669"/>
    <property type="project" value="Ensembl"/>
</dbReference>
<dbReference type="GO" id="GO:0006821">
    <property type="term" value="P:chloride transport"/>
    <property type="evidence" value="ECO:0000314"/>
    <property type="project" value="FlyBase"/>
</dbReference>
<dbReference type="GO" id="GO:0046847">
    <property type="term" value="P:filopodium assembly"/>
    <property type="evidence" value="ECO:0007669"/>
    <property type="project" value="Ensembl"/>
</dbReference>
<dbReference type="GO" id="GO:0010467">
    <property type="term" value="P:gene expression"/>
    <property type="evidence" value="ECO:0007669"/>
    <property type="project" value="Ensembl"/>
</dbReference>
<dbReference type="GO" id="GO:0006826">
    <property type="term" value="P:iron ion transport"/>
    <property type="evidence" value="ECO:0000303"/>
    <property type="project" value="UniProtKB"/>
</dbReference>
<dbReference type="GO" id="GO:0015813">
    <property type="term" value="P:L-glutamate transmembrane transport"/>
    <property type="evidence" value="ECO:0000250"/>
    <property type="project" value="UniProtKB"/>
</dbReference>
<dbReference type="GO" id="GO:0000278">
    <property type="term" value="P:mitotic cell cycle"/>
    <property type="evidence" value="ECO:0007669"/>
    <property type="project" value="Ensembl"/>
</dbReference>
<dbReference type="GO" id="GO:0034220">
    <property type="term" value="P:monoatomic ion transmembrane transport"/>
    <property type="evidence" value="ECO:0000304"/>
    <property type="project" value="Reactome"/>
</dbReference>
<dbReference type="GO" id="GO:0022008">
    <property type="term" value="P:neurogenesis"/>
    <property type="evidence" value="ECO:0007669"/>
    <property type="project" value="Ensembl"/>
</dbReference>
<dbReference type="GO" id="GO:0007219">
    <property type="term" value="P:Notch signaling pathway"/>
    <property type="evidence" value="ECO:0007669"/>
    <property type="project" value="Ensembl"/>
</dbReference>
<dbReference type="GO" id="GO:0048863">
    <property type="term" value="P:stem cell differentiation"/>
    <property type="evidence" value="ECO:0007669"/>
    <property type="project" value="Ensembl"/>
</dbReference>
<dbReference type="GO" id="GO:0072089">
    <property type="term" value="P:stem cell proliferation"/>
    <property type="evidence" value="ECO:0007669"/>
    <property type="project" value="Ensembl"/>
</dbReference>
<dbReference type="CDD" id="cd07912">
    <property type="entry name" value="Tweety_N"/>
    <property type="match status" value="1"/>
</dbReference>
<dbReference type="InterPro" id="IPR006990">
    <property type="entry name" value="Tweety"/>
</dbReference>
<dbReference type="PANTHER" id="PTHR12424:SF5">
    <property type="entry name" value="PROTEIN TWEETY HOMOLOG 1"/>
    <property type="match status" value="1"/>
</dbReference>
<dbReference type="PANTHER" id="PTHR12424">
    <property type="entry name" value="TWEETY-RELATED"/>
    <property type="match status" value="1"/>
</dbReference>
<dbReference type="Pfam" id="PF04906">
    <property type="entry name" value="Tweety"/>
    <property type="match status" value="1"/>
</dbReference>
<reference key="1">
    <citation type="journal article" date="2000" name="Genomics">
        <title>Human and mouse homologues of the Drosophila melanogaster tweety (tty) gene: a novel gene family encoding predicted transmembrane proteins.</title>
        <authorList>
            <person name="Campbell H.D."/>
            <person name="Kamei M."/>
            <person name="Claudianos C."/>
            <person name="Woollatt E."/>
            <person name="Sutherland G.R."/>
            <person name="Suzuki Y."/>
            <person name="Hida M."/>
            <person name="Sugano S."/>
            <person name="Young I.G."/>
        </authorList>
    </citation>
    <scope>NUCLEOTIDE SEQUENCE [MRNA] (ISOFORM 1)</scope>
    <source>
        <tissue>Brain</tissue>
    </source>
</reference>
<reference key="2">
    <citation type="journal article" date="2004" name="J. Biol. Chem.">
        <title>A novel human Cl(-) channel family related to Drosophila flightless locus.</title>
        <authorList>
            <person name="Suzuki M."/>
            <person name="Mizuno A."/>
        </authorList>
    </citation>
    <scope>NUCLEOTIDE SEQUENCE [MRNA] (ISOFORM 3)</scope>
    <scope>FUNCTION (ISOFORM 3)</scope>
    <scope>TRANSPORTER ACTIVITY (ISOFORM 3)</scope>
</reference>
<reference key="3">
    <citation type="submission" date="2004-08" db="EMBL/GenBank/DDBJ databases">
        <title>Homo sapiens mRNA.</title>
        <authorList>
            <person name="Sugiyama A."/>
            <person name="Inoue H."/>
            <person name="Oka M."/>
        </authorList>
    </citation>
    <scope>NUCLEOTIDE SEQUENCE [MRNA] (ISOFORM 2)</scope>
    <source>
        <tissue>Brain</tissue>
    </source>
</reference>
<reference key="4">
    <citation type="journal article" date="2004" name="Nat. Genet.">
        <title>Complete sequencing and characterization of 21,243 full-length human cDNAs.</title>
        <authorList>
            <person name="Ota T."/>
            <person name="Suzuki Y."/>
            <person name="Nishikawa T."/>
            <person name="Otsuki T."/>
            <person name="Sugiyama T."/>
            <person name="Irie R."/>
            <person name="Wakamatsu A."/>
            <person name="Hayashi K."/>
            <person name="Sato H."/>
            <person name="Nagai K."/>
            <person name="Kimura K."/>
            <person name="Makita H."/>
            <person name="Sekine M."/>
            <person name="Obayashi M."/>
            <person name="Nishi T."/>
            <person name="Shibahara T."/>
            <person name="Tanaka T."/>
            <person name="Ishii S."/>
            <person name="Yamamoto J."/>
            <person name="Saito K."/>
            <person name="Kawai Y."/>
            <person name="Isono Y."/>
            <person name="Nakamura Y."/>
            <person name="Nagahari K."/>
            <person name="Murakami K."/>
            <person name="Yasuda T."/>
            <person name="Iwayanagi T."/>
            <person name="Wagatsuma M."/>
            <person name="Shiratori A."/>
            <person name="Sudo H."/>
            <person name="Hosoiri T."/>
            <person name="Kaku Y."/>
            <person name="Kodaira H."/>
            <person name="Kondo H."/>
            <person name="Sugawara M."/>
            <person name="Takahashi M."/>
            <person name="Kanda K."/>
            <person name="Yokoi T."/>
            <person name="Furuya T."/>
            <person name="Kikkawa E."/>
            <person name="Omura Y."/>
            <person name="Abe K."/>
            <person name="Kamihara K."/>
            <person name="Katsuta N."/>
            <person name="Sato K."/>
            <person name="Tanikawa M."/>
            <person name="Yamazaki M."/>
            <person name="Ninomiya K."/>
            <person name="Ishibashi T."/>
            <person name="Yamashita H."/>
            <person name="Murakawa K."/>
            <person name="Fujimori K."/>
            <person name="Tanai H."/>
            <person name="Kimata M."/>
            <person name="Watanabe M."/>
            <person name="Hiraoka S."/>
            <person name="Chiba Y."/>
            <person name="Ishida S."/>
            <person name="Ono Y."/>
            <person name="Takiguchi S."/>
            <person name="Watanabe S."/>
            <person name="Yosida M."/>
            <person name="Hotuta T."/>
            <person name="Kusano J."/>
            <person name="Kanehori K."/>
            <person name="Takahashi-Fujii A."/>
            <person name="Hara H."/>
            <person name="Tanase T.-O."/>
            <person name="Nomura Y."/>
            <person name="Togiya S."/>
            <person name="Komai F."/>
            <person name="Hara R."/>
            <person name="Takeuchi K."/>
            <person name="Arita M."/>
            <person name="Imose N."/>
            <person name="Musashino K."/>
            <person name="Yuuki H."/>
            <person name="Oshima A."/>
            <person name="Sasaki N."/>
            <person name="Aotsuka S."/>
            <person name="Yoshikawa Y."/>
            <person name="Matsunawa H."/>
            <person name="Ichihara T."/>
            <person name="Shiohata N."/>
            <person name="Sano S."/>
            <person name="Moriya S."/>
            <person name="Momiyama H."/>
            <person name="Satoh N."/>
            <person name="Takami S."/>
            <person name="Terashima Y."/>
            <person name="Suzuki O."/>
            <person name="Nakagawa S."/>
            <person name="Senoh A."/>
            <person name="Mizoguchi H."/>
            <person name="Goto Y."/>
            <person name="Shimizu F."/>
            <person name="Wakebe H."/>
            <person name="Hishigaki H."/>
            <person name="Watanabe T."/>
            <person name="Sugiyama A."/>
            <person name="Takemoto M."/>
            <person name="Kawakami B."/>
            <person name="Yamazaki M."/>
            <person name="Watanabe K."/>
            <person name="Kumagai A."/>
            <person name="Itakura S."/>
            <person name="Fukuzumi Y."/>
            <person name="Fujimori Y."/>
            <person name="Komiyama M."/>
            <person name="Tashiro H."/>
            <person name="Tanigami A."/>
            <person name="Fujiwara T."/>
            <person name="Ono T."/>
            <person name="Yamada K."/>
            <person name="Fujii Y."/>
            <person name="Ozaki K."/>
            <person name="Hirao M."/>
            <person name="Ohmori Y."/>
            <person name="Kawabata A."/>
            <person name="Hikiji T."/>
            <person name="Kobatake N."/>
            <person name="Inagaki H."/>
            <person name="Ikema Y."/>
            <person name="Okamoto S."/>
            <person name="Okitani R."/>
            <person name="Kawakami T."/>
            <person name="Noguchi S."/>
            <person name="Itoh T."/>
            <person name="Shigeta K."/>
            <person name="Senba T."/>
            <person name="Matsumura K."/>
            <person name="Nakajima Y."/>
            <person name="Mizuno T."/>
            <person name="Morinaga M."/>
            <person name="Sasaki M."/>
            <person name="Togashi T."/>
            <person name="Oyama M."/>
            <person name="Hata H."/>
            <person name="Watanabe M."/>
            <person name="Komatsu T."/>
            <person name="Mizushima-Sugano J."/>
            <person name="Satoh T."/>
            <person name="Shirai Y."/>
            <person name="Takahashi Y."/>
            <person name="Nakagawa K."/>
            <person name="Okumura K."/>
            <person name="Nagase T."/>
            <person name="Nomura N."/>
            <person name="Kikuchi H."/>
            <person name="Masuho Y."/>
            <person name="Yamashita R."/>
            <person name="Nakai K."/>
            <person name="Yada T."/>
            <person name="Nakamura Y."/>
            <person name="Ohara O."/>
            <person name="Isogai T."/>
            <person name="Sugano S."/>
        </authorList>
    </citation>
    <scope>NUCLEOTIDE SEQUENCE [LARGE SCALE MRNA] (ISOFORMS 3 AND 5)</scope>
    <source>
        <tissue>Cerebellum</tissue>
    </source>
</reference>
<reference key="5">
    <citation type="journal article" date="2004" name="Nature">
        <title>The DNA sequence and biology of human chromosome 19.</title>
        <authorList>
            <person name="Grimwood J."/>
            <person name="Gordon L.A."/>
            <person name="Olsen A.S."/>
            <person name="Terry A."/>
            <person name="Schmutz J."/>
            <person name="Lamerdin J.E."/>
            <person name="Hellsten U."/>
            <person name="Goodstein D."/>
            <person name="Couronne O."/>
            <person name="Tran-Gyamfi M."/>
            <person name="Aerts A."/>
            <person name="Altherr M."/>
            <person name="Ashworth L."/>
            <person name="Bajorek E."/>
            <person name="Black S."/>
            <person name="Branscomb E."/>
            <person name="Caenepeel S."/>
            <person name="Carrano A.V."/>
            <person name="Caoile C."/>
            <person name="Chan Y.M."/>
            <person name="Christensen M."/>
            <person name="Cleland C.A."/>
            <person name="Copeland A."/>
            <person name="Dalin E."/>
            <person name="Dehal P."/>
            <person name="Denys M."/>
            <person name="Detter J.C."/>
            <person name="Escobar J."/>
            <person name="Flowers D."/>
            <person name="Fotopulos D."/>
            <person name="Garcia C."/>
            <person name="Georgescu A.M."/>
            <person name="Glavina T."/>
            <person name="Gomez M."/>
            <person name="Gonzales E."/>
            <person name="Groza M."/>
            <person name="Hammon N."/>
            <person name="Hawkins T."/>
            <person name="Haydu L."/>
            <person name="Ho I."/>
            <person name="Huang W."/>
            <person name="Israni S."/>
            <person name="Jett J."/>
            <person name="Kadner K."/>
            <person name="Kimball H."/>
            <person name="Kobayashi A."/>
            <person name="Larionov V."/>
            <person name="Leem S.-H."/>
            <person name="Lopez F."/>
            <person name="Lou Y."/>
            <person name="Lowry S."/>
            <person name="Malfatti S."/>
            <person name="Martinez D."/>
            <person name="McCready P.M."/>
            <person name="Medina C."/>
            <person name="Morgan J."/>
            <person name="Nelson K."/>
            <person name="Nolan M."/>
            <person name="Ovcharenko I."/>
            <person name="Pitluck S."/>
            <person name="Pollard M."/>
            <person name="Popkie A.P."/>
            <person name="Predki P."/>
            <person name="Quan G."/>
            <person name="Ramirez L."/>
            <person name="Rash S."/>
            <person name="Retterer J."/>
            <person name="Rodriguez A."/>
            <person name="Rogers S."/>
            <person name="Salamov A."/>
            <person name="Salazar A."/>
            <person name="She X."/>
            <person name="Smith D."/>
            <person name="Slezak T."/>
            <person name="Solovyev V."/>
            <person name="Thayer N."/>
            <person name="Tice H."/>
            <person name="Tsai M."/>
            <person name="Ustaszewska A."/>
            <person name="Vo N."/>
            <person name="Wagner M."/>
            <person name="Wheeler J."/>
            <person name="Wu K."/>
            <person name="Xie G."/>
            <person name="Yang J."/>
            <person name="Dubchak I."/>
            <person name="Furey T.S."/>
            <person name="DeJong P."/>
            <person name="Dickson M."/>
            <person name="Gordon D."/>
            <person name="Eichler E.E."/>
            <person name="Pennacchio L.A."/>
            <person name="Richardson P."/>
            <person name="Stubbs L."/>
            <person name="Rokhsar D.S."/>
            <person name="Myers R.M."/>
            <person name="Rubin E.M."/>
            <person name="Lucas S.M."/>
        </authorList>
    </citation>
    <scope>NUCLEOTIDE SEQUENCE [LARGE SCALE GENOMIC DNA]</scope>
</reference>
<reference key="6">
    <citation type="submission" date="2005-09" db="EMBL/GenBank/DDBJ databases">
        <authorList>
            <person name="Mural R.J."/>
            <person name="Istrail S."/>
            <person name="Sutton G.G."/>
            <person name="Florea L."/>
            <person name="Halpern A.L."/>
            <person name="Mobarry C.M."/>
            <person name="Lippert R."/>
            <person name="Walenz B."/>
            <person name="Shatkay H."/>
            <person name="Dew I."/>
            <person name="Miller J.R."/>
            <person name="Flanigan M.J."/>
            <person name="Edwards N.J."/>
            <person name="Bolanos R."/>
            <person name="Fasulo D."/>
            <person name="Halldorsson B.V."/>
            <person name="Hannenhalli S."/>
            <person name="Turner R."/>
            <person name="Yooseph S."/>
            <person name="Lu F."/>
            <person name="Nusskern D.R."/>
            <person name="Shue B.C."/>
            <person name="Zheng X.H."/>
            <person name="Zhong F."/>
            <person name="Delcher A.L."/>
            <person name="Huson D.H."/>
            <person name="Kravitz S.A."/>
            <person name="Mouchard L."/>
            <person name="Reinert K."/>
            <person name="Remington K.A."/>
            <person name="Clark A.G."/>
            <person name="Waterman M.S."/>
            <person name="Eichler E.E."/>
            <person name="Adams M.D."/>
            <person name="Hunkapiller M.W."/>
            <person name="Myers E.W."/>
            <person name="Venter J.C."/>
        </authorList>
    </citation>
    <scope>NUCLEOTIDE SEQUENCE [LARGE SCALE GENOMIC DNA]</scope>
</reference>
<reference key="7">
    <citation type="journal article" date="2004" name="Genome Res.">
        <title>The status, quality, and expansion of the NIH full-length cDNA project: the Mammalian Gene Collection (MGC).</title>
        <authorList>
            <consortium name="The MGC Project Team"/>
        </authorList>
    </citation>
    <scope>NUCLEOTIDE SEQUENCE [LARGE SCALE MRNA] (ISOFORMS 3 AND 4)</scope>
    <source>
        <tissue>Brain</tissue>
        <tissue>Placenta</tissue>
    </source>
</reference>
<reference key="8">
    <citation type="journal article" date="2007" name="J. Neurochem.">
        <title>Expression and evolution of the mammalian brain gene Ttyh1.</title>
        <authorList>
            <person name="Matthews C.A."/>
            <person name="Shaw J.E."/>
            <person name="Hooper J.A."/>
            <person name="Young I.G."/>
            <person name="Crouch M.F."/>
            <person name="Campbell H.D."/>
        </authorList>
    </citation>
    <scope>TISSUE SPECIFICITY</scope>
</reference>
<reference key="9">
    <citation type="journal article" date="2008" name="Biochem. J.">
        <title>N-glycosylation analysis of the human Tweety family of putative chloride ion channels supports a penta-spanning membrane arrangement: impact of N-glycosylation on cellular processing of Tweety homologue 2 (TTYH2).</title>
        <authorList>
            <person name="He Y."/>
            <person name="Ramsay A.J."/>
            <person name="Hunt M.L."/>
            <person name="Whitbread A.K."/>
            <person name="Myers S.A."/>
            <person name="Hooper J.D."/>
        </authorList>
    </citation>
    <scope>GLYCOSYLATION</scope>
    <scope>TOPOLOGY</scope>
</reference>
<reference evidence="14" key="10">
    <citation type="journal article" date="2021" name="Nat. Commun.">
        <title>Cryo-EM structures of the TTYH family reveal a novel architecture for lipid interactions.</title>
        <authorList>
            <person name="Sukalskaia A."/>
            <person name="Straub M.S."/>
            <person name="Deneka D."/>
            <person name="Sawicka M."/>
            <person name="Dutzler R."/>
        </authorList>
    </citation>
    <scope>STRUCTURE BY ELECTRON MICROSCOPY (4.00 ANGSTROMS) OF 2-450</scope>
    <scope>SUBCELLULAR LOCATION</scope>
    <scope>SUBUNIT</scope>
    <scope>DISULFIDE BOND</scope>
    <scope>CAUTION</scope>
</reference>
<organism>
    <name type="scientific">Homo sapiens</name>
    <name type="common">Human</name>
    <dbReference type="NCBI Taxonomy" id="9606"/>
    <lineage>
        <taxon>Eukaryota</taxon>
        <taxon>Metazoa</taxon>
        <taxon>Chordata</taxon>
        <taxon>Craniata</taxon>
        <taxon>Vertebrata</taxon>
        <taxon>Euteleostomi</taxon>
        <taxon>Mammalia</taxon>
        <taxon>Eutheria</taxon>
        <taxon>Euarchontoglires</taxon>
        <taxon>Primates</taxon>
        <taxon>Haplorrhini</taxon>
        <taxon>Catarrhini</taxon>
        <taxon>Hominidae</taxon>
        <taxon>Homo</taxon>
    </lineage>
</organism>
<evidence type="ECO:0000250" key="1">
    <source>
        <dbReference type="UniProtKB" id="Q9D3A9"/>
    </source>
</evidence>
<evidence type="ECO:0000255" key="2"/>
<evidence type="ECO:0000256" key="3">
    <source>
        <dbReference type="SAM" id="MobiDB-lite"/>
    </source>
</evidence>
<evidence type="ECO:0000269" key="4">
    <source>
    </source>
</evidence>
<evidence type="ECO:0000269" key="5">
    <source>
    </source>
</evidence>
<evidence type="ECO:0000269" key="6">
    <source>
    </source>
</evidence>
<evidence type="ECO:0000269" key="7">
    <source>
    </source>
</evidence>
<evidence type="ECO:0000303" key="8">
    <source>
    </source>
</evidence>
<evidence type="ECO:0000303" key="9">
    <source>
    </source>
</evidence>
<evidence type="ECO:0000303" key="10">
    <source>
    </source>
</evidence>
<evidence type="ECO:0000303" key="11">
    <source ref="3"/>
</evidence>
<evidence type="ECO:0000305" key="12"/>
<evidence type="ECO:0000305" key="13">
    <source>
    </source>
</evidence>
<evidence type="ECO:0007744" key="14">
    <source>
        <dbReference type="PDB" id="7P5J"/>
    </source>
</evidence>
<protein>
    <recommendedName>
        <fullName>Protein tweety homolog 1</fullName>
        <shortName>hTTY1</shortName>
    </recommendedName>
    <alternativeName>
        <fullName evidence="1">Volume-regulated anion channel subunit TTYH1</fullName>
    </alternativeName>
</protein>
<keyword id="KW-0002">3D-structure</keyword>
<keyword id="KW-0025">Alternative splicing</keyword>
<keyword id="KW-0130">Cell adhesion</keyword>
<keyword id="KW-1003">Cell membrane</keyword>
<keyword id="KW-0868">Chloride</keyword>
<keyword id="KW-0869">Chloride channel</keyword>
<keyword id="KW-1015">Disulfide bond</keyword>
<keyword id="KW-0325">Glycoprotein</keyword>
<keyword id="KW-0407">Ion channel</keyword>
<keyword id="KW-0406">Ion transport</keyword>
<keyword id="KW-0472">Membrane</keyword>
<keyword id="KW-0597">Phosphoprotein</keyword>
<keyword id="KW-1267">Proteomics identification</keyword>
<keyword id="KW-1185">Reference proteome</keyword>
<keyword id="KW-0812">Transmembrane</keyword>
<keyword id="KW-1133">Transmembrane helix</keyword>
<keyword id="KW-0813">Transport</keyword>
<accession>Q9H313</accession>
<accession>B0VJY3</accession>
<accession>B0VJY4</accession>
<accession>B0VJY5</accession>
<accession>B2VAL9</accession>
<accession>Q5U682</accession>
<accession>Q68A17</accession>
<accession>Q6L750</accession>
<accession>Q6ZTE5</accession>
<accession>Q8WUU2</accession>
<gene>
    <name type="primary">TTYH1</name>
</gene>
<name>TTYH1_HUMAN</name>
<proteinExistence type="evidence at protein level"/>